<gene>
    <name evidence="1" type="primary">leuS</name>
    <name type="ordered locus">SAUSA300_1704</name>
</gene>
<accession>Q2FFY0</accession>
<evidence type="ECO:0000255" key="1">
    <source>
        <dbReference type="HAMAP-Rule" id="MF_00049"/>
    </source>
</evidence>
<dbReference type="EC" id="6.1.1.4" evidence="1"/>
<dbReference type="EMBL" id="CP000255">
    <property type="protein sequence ID" value="ABD21450.1"/>
    <property type="molecule type" value="Genomic_DNA"/>
</dbReference>
<dbReference type="RefSeq" id="WP_001549041.1">
    <property type="nucleotide sequence ID" value="NZ_CP027476.1"/>
</dbReference>
<dbReference type="SMR" id="Q2FFY0"/>
<dbReference type="KEGG" id="saa:SAUSA300_1704"/>
<dbReference type="HOGENOM" id="CLU_004427_0_0_9"/>
<dbReference type="OMA" id="GIEHACM"/>
<dbReference type="Proteomes" id="UP000001939">
    <property type="component" value="Chromosome"/>
</dbReference>
<dbReference type="GO" id="GO:0005829">
    <property type="term" value="C:cytosol"/>
    <property type="evidence" value="ECO:0007669"/>
    <property type="project" value="TreeGrafter"/>
</dbReference>
<dbReference type="GO" id="GO:0002161">
    <property type="term" value="F:aminoacyl-tRNA deacylase activity"/>
    <property type="evidence" value="ECO:0007669"/>
    <property type="project" value="InterPro"/>
</dbReference>
<dbReference type="GO" id="GO:0005524">
    <property type="term" value="F:ATP binding"/>
    <property type="evidence" value="ECO:0007669"/>
    <property type="project" value="UniProtKB-UniRule"/>
</dbReference>
<dbReference type="GO" id="GO:0004823">
    <property type="term" value="F:leucine-tRNA ligase activity"/>
    <property type="evidence" value="ECO:0007669"/>
    <property type="project" value="UniProtKB-UniRule"/>
</dbReference>
<dbReference type="GO" id="GO:0006429">
    <property type="term" value="P:leucyl-tRNA aminoacylation"/>
    <property type="evidence" value="ECO:0007669"/>
    <property type="project" value="UniProtKB-UniRule"/>
</dbReference>
<dbReference type="CDD" id="cd07958">
    <property type="entry name" value="Anticodon_Ia_Leu_BEm"/>
    <property type="match status" value="1"/>
</dbReference>
<dbReference type="CDD" id="cd00812">
    <property type="entry name" value="LeuRS_core"/>
    <property type="match status" value="1"/>
</dbReference>
<dbReference type="FunFam" id="1.10.730.10:FF:000012">
    <property type="entry name" value="Leucine--tRNA ligase"/>
    <property type="match status" value="1"/>
</dbReference>
<dbReference type="FunFam" id="1.10.730.10:FF:000018">
    <property type="entry name" value="Leucine--tRNA ligase"/>
    <property type="match status" value="1"/>
</dbReference>
<dbReference type="FunFam" id="3.10.20.590:FF:000001">
    <property type="entry name" value="Leucine--tRNA ligase"/>
    <property type="match status" value="1"/>
</dbReference>
<dbReference type="FunFam" id="3.40.50.620:FF:000056">
    <property type="entry name" value="Leucine--tRNA ligase"/>
    <property type="match status" value="1"/>
</dbReference>
<dbReference type="FunFam" id="3.40.50.620:FF:000077">
    <property type="entry name" value="Leucine--tRNA ligase"/>
    <property type="match status" value="1"/>
</dbReference>
<dbReference type="Gene3D" id="3.10.20.590">
    <property type="match status" value="1"/>
</dbReference>
<dbReference type="Gene3D" id="3.40.50.620">
    <property type="entry name" value="HUPs"/>
    <property type="match status" value="2"/>
</dbReference>
<dbReference type="Gene3D" id="1.10.730.10">
    <property type="entry name" value="Isoleucyl-tRNA Synthetase, Domain 1"/>
    <property type="match status" value="1"/>
</dbReference>
<dbReference type="HAMAP" id="MF_00049_B">
    <property type="entry name" value="Leu_tRNA_synth_B"/>
    <property type="match status" value="1"/>
</dbReference>
<dbReference type="InterPro" id="IPR001412">
    <property type="entry name" value="aa-tRNA-synth_I_CS"/>
</dbReference>
<dbReference type="InterPro" id="IPR002300">
    <property type="entry name" value="aa-tRNA-synth_Ia"/>
</dbReference>
<dbReference type="InterPro" id="IPR002302">
    <property type="entry name" value="Leu-tRNA-ligase"/>
</dbReference>
<dbReference type="InterPro" id="IPR025709">
    <property type="entry name" value="Leu_tRNA-synth_edit"/>
</dbReference>
<dbReference type="InterPro" id="IPR013155">
    <property type="entry name" value="M/V/L/I-tRNA-synth_anticd-bd"/>
</dbReference>
<dbReference type="InterPro" id="IPR015413">
    <property type="entry name" value="Methionyl/Leucyl_tRNA_Synth"/>
</dbReference>
<dbReference type="InterPro" id="IPR014729">
    <property type="entry name" value="Rossmann-like_a/b/a_fold"/>
</dbReference>
<dbReference type="InterPro" id="IPR009080">
    <property type="entry name" value="tRNAsynth_Ia_anticodon-bd"/>
</dbReference>
<dbReference type="InterPro" id="IPR009008">
    <property type="entry name" value="Val/Leu/Ile-tRNA-synth_edit"/>
</dbReference>
<dbReference type="NCBIfam" id="TIGR00396">
    <property type="entry name" value="leuS_bact"/>
    <property type="match status" value="1"/>
</dbReference>
<dbReference type="PANTHER" id="PTHR43740:SF2">
    <property type="entry name" value="LEUCINE--TRNA LIGASE, MITOCHONDRIAL"/>
    <property type="match status" value="1"/>
</dbReference>
<dbReference type="PANTHER" id="PTHR43740">
    <property type="entry name" value="LEUCYL-TRNA SYNTHETASE"/>
    <property type="match status" value="1"/>
</dbReference>
<dbReference type="Pfam" id="PF08264">
    <property type="entry name" value="Anticodon_1"/>
    <property type="match status" value="1"/>
</dbReference>
<dbReference type="Pfam" id="PF00133">
    <property type="entry name" value="tRNA-synt_1"/>
    <property type="match status" value="1"/>
</dbReference>
<dbReference type="Pfam" id="PF13603">
    <property type="entry name" value="tRNA-synt_1_2"/>
    <property type="match status" value="1"/>
</dbReference>
<dbReference type="Pfam" id="PF09334">
    <property type="entry name" value="tRNA-synt_1g"/>
    <property type="match status" value="1"/>
</dbReference>
<dbReference type="PRINTS" id="PR00985">
    <property type="entry name" value="TRNASYNTHLEU"/>
</dbReference>
<dbReference type="SUPFAM" id="SSF47323">
    <property type="entry name" value="Anticodon-binding domain of a subclass of class I aminoacyl-tRNA synthetases"/>
    <property type="match status" value="1"/>
</dbReference>
<dbReference type="SUPFAM" id="SSF52374">
    <property type="entry name" value="Nucleotidylyl transferase"/>
    <property type="match status" value="1"/>
</dbReference>
<dbReference type="SUPFAM" id="SSF50677">
    <property type="entry name" value="ValRS/IleRS/LeuRS editing domain"/>
    <property type="match status" value="1"/>
</dbReference>
<dbReference type="PROSITE" id="PS00178">
    <property type="entry name" value="AA_TRNA_LIGASE_I"/>
    <property type="match status" value="1"/>
</dbReference>
<name>SYL_STAA3</name>
<proteinExistence type="inferred from homology"/>
<keyword id="KW-0030">Aminoacyl-tRNA synthetase</keyword>
<keyword id="KW-0067">ATP-binding</keyword>
<keyword id="KW-0963">Cytoplasm</keyword>
<keyword id="KW-0436">Ligase</keyword>
<keyword id="KW-0547">Nucleotide-binding</keyword>
<keyword id="KW-0648">Protein biosynthesis</keyword>
<reference key="1">
    <citation type="journal article" date="2006" name="Lancet">
        <title>Complete genome sequence of USA300, an epidemic clone of community-acquired meticillin-resistant Staphylococcus aureus.</title>
        <authorList>
            <person name="Diep B.A."/>
            <person name="Gill S.R."/>
            <person name="Chang R.F."/>
            <person name="Phan T.H."/>
            <person name="Chen J.H."/>
            <person name="Davidson M.G."/>
            <person name="Lin F."/>
            <person name="Lin J."/>
            <person name="Carleton H.A."/>
            <person name="Mongodin E.F."/>
            <person name="Sensabaugh G.F."/>
            <person name="Perdreau-Remington F."/>
        </authorList>
    </citation>
    <scope>NUCLEOTIDE SEQUENCE [LARGE SCALE GENOMIC DNA]</scope>
    <source>
        <strain>USA300</strain>
    </source>
</reference>
<sequence length="805" mass="91786">MLNYNHNQIEKKWQDYWDENKTFKTNDNLGQKKFYALDMFPYPSGAGLHVGHPEGYTATDIISRYKRMQGYNVLHPMGWDAFGLPAEQYALDTGNDPREFTKKNIQTFKRQIKELGFSYDWDREVNTTDPEYYKWTQWIFIQLYNKGLAYVDEVAVNWCPALGTVLSNEEVIDGVSERGGHPVYRKPMKQWVLKITEYADQLLADLDDLDWPESLKDMQRNWIGRSEGAKVSFDVDNTEGKVEVFTTRPDTIYGASFLVLSPEHALVNSITTDEYKEKVKAYQTEASKKSDLERTDLAKDKSGVFTGAYATNPLSGEKVQIWIADYVLSTYGTGAIMAVPAHDDRDYEFAKKFDLPIIEVIEGGNVEEAAYTGEGKHINSGELDGLENEAAITKAIQLLEQKGAGEKKVNYKLRDWLFSRQRYWGEPIPVIHWEDGTMTTVPEEELPLLLPETDEIKPSGTGESPLANIDSFVNVVDEKTGMKGRRETNTMPQWAGSCWYYLRYIDPKNENMLADPEKLKHWLPVDLYIGGVEHAVLHLLYARFWHKVLYDLAIVPTKEPFQKLFNQGMILGEGNEKMSKSKGNVINPDDIVQSHGADTLRLYEMFMGPLDAAIAWSEKGLDGSRRFLDRVWRLMVNEDGTLSSKIVTTNNKSLDKVYNQTVKKVTEDFETLGFNTAISQLMVFINECYKVDEVYKPYIEGFVKMLAPIAPHIGEELWSKLGHEESITYQPWPTYDEALLVDDEVEIVVQVNGKLRAKIKIAKDTSKEEMQEIALSNDNVKASIEGKDIMKVIAVPQKLVNIVAK</sequence>
<feature type="chain" id="PRO_1000009437" description="Leucine--tRNA ligase">
    <location>
        <begin position="1"/>
        <end position="805"/>
    </location>
</feature>
<feature type="short sequence motif" description="'HIGH' region">
    <location>
        <begin position="41"/>
        <end position="52"/>
    </location>
</feature>
<feature type="short sequence motif" description="'KMSKS' region">
    <location>
        <begin position="577"/>
        <end position="581"/>
    </location>
</feature>
<feature type="binding site" evidence="1">
    <location>
        <position position="580"/>
    </location>
    <ligand>
        <name>ATP</name>
        <dbReference type="ChEBI" id="CHEBI:30616"/>
    </ligand>
</feature>
<organism>
    <name type="scientific">Staphylococcus aureus (strain USA300)</name>
    <dbReference type="NCBI Taxonomy" id="367830"/>
    <lineage>
        <taxon>Bacteria</taxon>
        <taxon>Bacillati</taxon>
        <taxon>Bacillota</taxon>
        <taxon>Bacilli</taxon>
        <taxon>Bacillales</taxon>
        <taxon>Staphylococcaceae</taxon>
        <taxon>Staphylococcus</taxon>
    </lineage>
</organism>
<protein>
    <recommendedName>
        <fullName evidence="1">Leucine--tRNA ligase</fullName>
        <ecNumber evidence="1">6.1.1.4</ecNumber>
    </recommendedName>
    <alternativeName>
        <fullName evidence="1">Leucyl-tRNA synthetase</fullName>
        <shortName evidence="1">LeuRS</shortName>
    </alternativeName>
</protein>
<comment type="catalytic activity">
    <reaction evidence="1">
        <text>tRNA(Leu) + L-leucine + ATP = L-leucyl-tRNA(Leu) + AMP + diphosphate</text>
        <dbReference type="Rhea" id="RHEA:11688"/>
        <dbReference type="Rhea" id="RHEA-COMP:9613"/>
        <dbReference type="Rhea" id="RHEA-COMP:9622"/>
        <dbReference type="ChEBI" id="CHEBI:30616"/>
        <dbReference type="ChEBI" id="CHEBI:33019"/>
        <dbReference type="ChEBI" id="CHEBI:57427"/>
        <dbReference type="ChEBI" id="CHEBI:78442"/>
        <dbReference type="ChEBI" id="CHEBI:78494"/>
        <dbReference type="ChEBI" id="CHEBI:456215"/>
        <dbReference type="EC" id="6.1.1.4"/>
    </reaction>
</comment>
<comment type="subcellular location">
    <subcellularLocation>
        <location evidence="1">Cytoplasm</location>
    </subcellularLocation>
</comment>
<comment type="similarity">
    <text evidence="1">Belongs to the class-I aminoacyl-tRNA synthetase family.</text>
</comment>